<organism>
    <name type="scientific">Aromatoleum aromaticum (strain DSM 19018 / LMG 30748 / EbN1)</name>
    <name type="common">Azoarcus sp. (strain EbN1)</name>
    <dbReference type="NCBI Taxonomy" id="76114"/>
    <lineage>
        <taxon>Bacteria</taxon>
        <taxon>Pseudomonadati</taxon>
        <taxon>Pseudomonadota</taxon>
        <taxon>Betaproteobacteria</taxon>
        <taxon>Rhodocyclales</taxon>
        <taxon>Rhodocyclaceae</taxon>
        <taxon>Aromatoleum</taxon>
    </lineage>
</organism>
<comment type="function">
    <text evidence="1">Condensation of UDP-2,3-diacylglucosamine and 2,3-diacylglucosamine-1-phosphate to form lipid A disaccharide, a precursor of lipid A, a phosphorylated glycolipid that anchors the lipopolysaccharide to the outer membrane of the cell.</text>
</comment>
<comment type="catalytic activity">
    <reaction evidence="1">
        <text>a lipid X + a UDP-2-N,3-O-bis[(3R)-3-hydroxyacyl]-alpha-D-glucosamine = a lipid A disaccharide + UDP + H(+)</text>
        <dbReference type="Rhea" id="RHEA:67828"/>
        <dbReference type="ChEBI" id="CHEBI:15378"/>
        <dbReference type="ChEBI" id="CHEBI:58223"/>
        <dbReference type="ChEBI" id="CHEBI:137748"/>
        <dbReference type="ChEBI" id="CHEBI:176338"/>
        <dbReference type="ChEBI" id="CHEBI:176343"/>
        <dbReference type="EC" id="2.4.1.182"/>
    </reaction>
</comment>
<comment type="pathway">
    <text evidence="1">Bacterial outer membrane biogenesis; LPS lipid A biosynthesis.</text>
</comment>
<comment type="similarity">
    <text evidence="1">Belongs to the LpxB family.</text>
</comment>
<sequence length="391" mass="43120">MATRIAMVAGEASGDLLASHLIRAIRQQVPEAEFYGIGGPKMQAEGFDALWPCERLAVHGYVDALKRYRELSGIRKALLRRVQADRPDAFIGVDAPDFNLWLEGRIRSSGIPAIHFVSPSIWAWRGGRIKGIARSVSHMLCLFPFEPALYEKAGIPVSYVGHPLADVFPLVPDRAAARELLSLPTDCRIVALLPGSRQSEVRSLAATYIETARLLAERHPDIGFVVPLATRETRALFEQALHAADADELPIRLLFGHAVEAMTAADVVLVASGTASLEAALLKRPMVISYRIGKWQYRLMKRMAYLPWVGLPNILCNDSVVPELLQDDATPQALADALDRWLNDADACAELALRFDALHRELRQDTAGRAAAAILPYLNRSPEWKPSRQSA</sequence>
<gene>
    <name evidence="1" type="primary">lpxB</name>
    <name type="ordered locus">AZOSEA34270</name>
    <name type="ORF">ebA6002</name>
</gene>
<protein>
    <recommendedName>
        <fullName evidence="1">Lipid-A-disaccharide synthase</fullName>
        <ecNumber evidence="1">2.4.1.182</ecNumber>
    </recommendedName>
</protein>
<dbReference type="EC" id="2.4.1.182" evidence="1"/>
<dbReference type="EMBL" id="CR555306">
    <property type="protein sequence ID" value="CAI09552.1"/>
    <property type="molecule type" value="Genomic_DNA"/>
</dbReference>
<dbReference type="RefSeq" id="WP_011239212.1">
    <property type="nucleotide sequence ID" value="NC_006513.1"/>
</dbReference>
<dbReference type="SMR" id="Q5NZG2"/>
<dbReference type="STRING" id="76114.ebA6002"/>
<dbReference type="CAZy" id="GT19">
    <property type="family name" value="Glycosyltransferase Family 19"/>
</dbReference>
<dbReference type="KEGG" id="eba:ebA6002"/>
<dbReference type="eggNOG" id="COG0763">
    <property type="taxonomic scope" value="Bacteria"/>
</dbReference>
<dbReference type="HOGENOM" id="CLU_036577_3_0_4"/>
<dbReference type="OrthoDB" id="9801642at2"/>
<dbReference type="UniPathway" id="UPA00973"/>
<dbReference type="Proteomes" id="UP000006552">
    <property type="component" value="Chromosome"/>
</dbReference>
<dbReference type="GO" id="GO:0016020">
    <property type="term" value="C:membrane"/>
    <property type="evidence" value="ECO:0007669"/>
    <property type="project" value="GOC"/>
</dbReference>
<dbReference type="GO" id="GO:0008915">
    <property type="term" value="F:lipid-A-disaccharide synthase activity"/>
    <property type="evidence" value="ECO:0007669"/>
    <property type="project" value="UniProtKB-UniRule"/>
</dbReference>
<dbReference type="GO" id="GO:0005543">
    <property type="term" value="F:phospholipid binding"/>
    <property type="evidence" value="ECO:0007669"/>
    <property type="project" value="TreeGrafter"/>
</dbReference>
<dbReference type="GO" id="GO:0009245">
    <property type="term" value="P:lipid A biosynthetic process"/>
    <property type="evidence" value="ECO:0007669"/>
    <property type="project" value="UniProtKB-UniRule"/>
</dbReference>
<dbReference type="Gene3D" id="3.40.50.2000">
    <property type="entry name" value="Glycogen Phosphorylase B"/>
    <property type="match status" value="1"/>
</dbReference>
<dbReference type="HAMAP" id="MF_00392">
    <property type="entry name" value="LpxB"/>
    <property type="match status" value="1"/>
</dbReference>
<dbReference type="InterPro" id="IPR003835">
    <property type="entry name" value="Glyco_trans_19"/>
</dbReference>
<dbReference type="NCBIfam" id="TIGR00215">
    <property type="entry name" value="lpxB"/>
    <property type="match status" value="1"/>
</dbReference>
<dbReference type="PANTHER" id="PTHR30372">
    <property type="entry name" value="LIPID-A-DISACCHARIDE SYNTHASE"/>
    <property type="match status" value="1"/>
</dbReference>
<dbReference type="PANTHER" id="PTHR30372:SF4">
    <property type="entry name" value="LIPID-A-DISACCHARIDE SYNTHASE, MITOCHONDRIAL-RELATED"/>
    <property type="match status" value="1"/>
</dbReference>
<dbReference type="Pfam" id="PF02684">
    <property type="entry name" value="LpxB"/>
    <property type="match status" value="1"/>
</dbReference>
<dbReference type="SUPFAM" id="SSF53756">
    <property type="entry name" value="UDP-Glycosyltransferase/glycogen phosphorylase"/>
    <property type="match status" value="1"/>
</dbReference>
<evidence type="ECO:0000255" key="1">
    <source>
        <dbReference type="HAMAP-Rule" id="MF_00392"/>
    </source>
</evidence>
<reference key="1">
    <citation type="journal article" date="2005" name="Arch. Microbiol.">
        <title>The genome sequence of an anaerobic aromatic-degrading denitrifying bacterium, strain EbN1.</title>
        <authorList>
            <person name="Rabus R."/>
            <person name="Kube M."/>
            <person name="Heider J."/>
            <person name="Beck A."/>
            <person name="Heitmann K."/>
            <person name="Widdel F."/>
            <person name="Reinhardt R."/>
        </authorList>
    </citation>
    <scope>NUCLEOTIDE SEQUENCE [LARGE SCALE GENOMIC DNA]</scope>
    <source>
        <strain>DSM 19018 / LMG 30748 / EbN1</strain>
    </source>
</reference>
<keyword id="KW-0328">Glycosyltransferase</keyword>
<keyword id="KW-0441">Lipid A biosynthesis</keyword>
<keyword id="KW-0444">Lipid biosynthesis</keyword>
<keyword id="KW-0443">Lipid metabolism</keyword>
<keyword id="KW-1185">Reference proteome</keyword>
<keyword id="KW-0808">Transferase</keyword>
<name>LPXB_AROAE</name>
<feature type="chain" id="PRO_0000255160" description="Lipid-A-disaccharide synthase">
    <location>
        <begin position="1"/>
        <end position="391"/>
    </location>
</feature>
<accession>Q5NZG2</accession>
<proteinExistence type="inferred from homology"/>